<gene>
    <name evidence="1" type="primary">rplQ</name>
    <name type="ordered locus">CLK_2894</name>
</gene>
<dbReference type="EMBL" id="CP000962">
    <property type="protein sequence ID" value="ACA56765.1"/>
    <property type="molecule type" value="Genomic_DNA"/>
</dbReference>
<dbReference type="RefSeq" id="WP_003482958.1">
    <property type="nucleotide sequence ID" value="NC_010520.1"/>
</dbReference>
<dbReference type="SMR" id="B1KSJ5"/>
<dbReference type="GeneID" id="92940220"/>
<dbReference type="KEGG" id="cbl:CLK_2894"/>
<dbReference type="HOGENOM" id="CLU_074407_2_2_9"/>
<dbReference type="GO" id="GO:0022625">
    <property type="term" value="C:cytosolic large ribosomal subunit"/>
    <property type="evidence" value="ECO:0007669"/>
    <property type="project" value="TreeGrafter"/>
</dbReference>
<dbReference type="GO" id="GO:0003735">
    <property type="term" value="F:structural constituent of ribosome"/>
    <property type="evidence" value="ECO:0007669"/>
    <property type="project" value="InterPro"/>
</dbReference>
<dbReference type="GO" id="GO:0006412">
    <property type="term" value="P:translation"/>
    <property type="evidence" value="ECO:0007669"/>
    <property type="project" value="UniProtKB-UniRule"/>
</dbReference>
<dbReference type="FunFam" id="3.90.1030.10:FF:000002">
    <property type="entry name" value="50S ribosomal protein L17"/>
    <property type="match status" value="1"/>
</dbReference>
<dbReference type="Gene3D" id="3.90.1030.10">
    <property type="entry name" value="Ribosomal protein L17"/>
    <property type="match status" value="1"/>
</dbReference>
<dbReference type="HAMAP" id="MF_01368">
    <property type="entry name" value="Ribosomal_bL17"/>
    <property type="match status" value="1"/>
</dbReference>
<dbReference type="InterPro" id="IPR000456">
    <property type="entry name" value="Ribosomal_bL17"/>
</dbReference>
<dbReference type="InterPro" id="IPR047859">
    <property type="entry name" value="Ribosomal_bL17_CS"/>
</dbReference>
<dbReference type="InterPro" id="IPR036373">
    <property type="entry name" value="Ribosomal_bL17_sf"/>
</dbReference>
<dbReference type="NCBIfam" id="TIGR00059">
    <property type="entry name" value="L17"/>
    <property type="match status" value="1"/>
</dbReference>
<dbReference type="PANTHER" id="PTHR14413:SF16">
    <property type="entry name" value="LARGE RIBOSOMAL SUBUNIT PROTEIN BL17M"/>
    <property type="match status" value="1"/>
</dbReference>
<dbReference type="PANTHER" id="PTHR14413">
    <property type="entry name" value="RIBOSOMAL PROTEIN L17"/>
    <property type="match status" value="1"/>
</dbReference>
<dbReference type="Pfam" id="PF01196">
    <property type="entry name" value="Ribosomal_L17"/>
    <property type="match status" value="1"/>
</dbReference>
<dbReference type="SUPFAM" id="SSF64263">
    <property type="entry name" value="Prokaryotic ribosomal protein L17"/>
    <property type="match status" value="1"/>
</dbReference>
<dbReference type="PROSITE" id="PS01167">
    <property type="entry name" value="RIBOSOMAL_L17"/>
    <property type="match status" value="1"/>
</dbReference>
<accession>B1KSJ5</accession>
<sequence length="113" mass="12888">MAGYRKLGRPTDQRKAMLRNLVTSFLKHGKIETTETRAKETRSIAEKMITLAKRGDLHARRQVLSFVTEEAVVQRLFEEIAPKYAERNGGYTRIYKVGPRRGDGAEVVILELV</sequence>
<keyword id="KW-0687">Ribonucleoprotein</keyword>
<keyword id="KW-0689">Ribosomal protein</keyword>
<protein>
    <recommendedName>
        <fullName evidence="1">Large ribosomal subunit protein bL17</fullName>
    </recommendedName>
    <alternativeName>
        <fullName evidence="2">50S ribosomal protein L17</fullName>
    </alternativeName>
</protein>
<evidence type="ECO:0000255" key="1">
    <source>
        <dbReference type="HAMAP-Rule" id="MF_01368"/>
    </source>
</evidence>
<evidence type="ECO:0000305" key="2"/>
<name>RL17_CLOBM</name>
<feature type="chain" id="PRO_1000144403" description="Large ribosomal subunit protein bL17">
    <location>
        <begin position="1"/>
        <end position="113"/>
    </location>
</feature>
<comment type="subunit">
    <text evidence="1">Part of the 50S ribosomal subunit. Contacts protein L32.</text>
</comment>
<comment type="similarity">
    <text evidence="1">Belongs to the bacterial ribosomal protein bL17 family.</text>
</comment>
<proteinExistence type="inferred from homology"/>
<organism>
    <name type="scientific">Clostridium botulinum (strain Loch Maree / Type A3)</name>
    <dbReference type="NCBI Taxonomy" id="498214"/>
    <lineage>
        <taxon>Bacteria</taxon>
        <taxon>Bacillati</taxon>
        <taxon>Bacillota</taxon>
        <taxon>Clostridia</taxon>
        <taxon>Eubacteriales</taxon>
        <taxon>Clostridiaceae</taxon>
        <taxon>Clostridium</taxon>
    </lineage>
</organism>
<reference key="1">
    <citation type="journal article" date="2007" name="PLoS ONE">
        <title>Analysis of the neurotoxin complex genes in Clostridium botulinum A1-A4 and B1 strains: BoNT/A3, /Ba4 and /B1 clusters are located within plasmids.</title>
        <authorList>
            <person name="Smith T.J."/>
            <person name="Hill K.K."/>
            <person name="Foley B.T."/>
            <person name="Detter J.C."/>
            <person name="Munk A.C."/>
            <person name="Bruce D.C."/>
            <person name="Doggett N.A."/>
            <person name="Smith L.A."/>
            <person name="Marks J.D."/>
            <person name="Xie G."/>
            <person name="Brettin T.S."/>
        </authorList>
    </citation>
    <scope>NUCLEOTIDE SEQUENCE [LARGE SCALE GENOMIC DNA]</scope>
    <source>
        <strain>Loch Maree / Type A3</strain>
    </source>
</reference>